<comment type="function">
    <text evidence="5">The light-harvesting complex (LHC) functions as a light receptor, it captures and delivers excitation energy to photosystems with which it is closely associated.</text>
</comment>
<comment type="function">
    <text evidence="5">May channel protons produced in the catalytic Mn center of water oxidation into the thylakoid lumen.</text>
</comment>
<comment type="cofactor">
    <text evidence="1">Binds at least 14 chlorophylls (8 Chl-a and 6 Chl-b) and carotenoids such as lutein and neoxanthin.</text>
</comment>
<comment type="subunit">
    <text>The LHC complex consists of chlorophyll a-b binding proteins.</text>
</comment>
<comment type="subcellular location">
    <subcellularLocation>
        <location>Plastid</location>
        <location>Chloroplast thylakoid membrane</location>
        <topology>Multi-pass membrane protein</topology>
    </subcellularLocation>
</comment>
<comment type="domain">
    <text>The N-terminus of the protein extends into the stroma where it is involved with adhesion of granal membranes and post-translational modifications; both are believed to mediate the distribution of excitation energy between photosystems I and II.</text>
</comment>
<comment type="PTM">
    <text evidence="1">Photoregulated by reversible phosphorylation of its threonine residues.</text>
</comment>
<comment type="similarity">
    <text evidence="6">Belongs to the light-harvesting chlorophyll a/b-binding (LHC) protein family.</text>
</comment>
<reference key="1">
    <citation type="journal article" date="1991" name="Plant Mol. Biol.">
        <title>Nucleotide sequence of Cab-215, a type II gene encoding a photosystem II chlorophyll a/b-binding protein in Pisum.</title>
        <authorList>
            <person name="Falconet D.R."/>
            <person name="White M.J."/>
            <person name="Fristensky B.W."/>
            <person name="Dobres M.S."/>
            <person name="Thompson W.F."/>
        </authorList>
    </citation>
    <scope>NUCLEOTIDE SEQUENCE [GENOMIC DNA]</scope>
    <source>
        <strain>cv. Alaska</strain>
    </source>
</reference>
<reference key="2">
    <citation type="submission" date="2004-12" db="EMBL/GenBank/DDBJ databases">
        <authorList>
            <person name="Zhang Y."/>
        </authorList>
    </citation>
    <scope>NUCLEOTIDE SEQUENCE [MRNA]</scope>
</reference>
<reference key="3">
    <citation type="journal article" date="1990" name="Eur. J. Biochem.">
        <title>Dicyclohexylcarbodiimide-binding proteins related to the short circuit of the proton-pumping activity of photosystem II. Identified as light-harvesting chlorophyll-a/b-binding proteins.</title>
        <authorList>
            <person name="Jahns P."/>
            <person name="Junge W."/>
        </authorList>
    </citation>
    <scope>PROTEIN SEQUENCE OF 107-122</scope>
    <scope>FUNCTION</scope>
    <source>
        <tissue>Seedling</tissue>
    </source>
</reference>
<dbReference type="EMBL" id="X57082">
    <property type="protein sequence ID" value="CAA40365.1"/>
    <property type="molecule type" value="Genomic_DNA"/>
</dbReference>
<dbReference type="EMBL" id="AY845254">
    <property type="protein sequence ID" value="AAW31512.1"/>
    <property type="molecule type" value="mRNA"/>
</dbReference>
<dbReference type="PIR" id="S16592">
    <property type="entry name" value="S16592"/>
</dbReference>
<dbReference type="SMR" id="P27520"/>
<dbReference type="GO" id="GO:0009535">
    <property type="term" value="C:chloroplast thylakoid membrane"/>
    <property type="evidence" value="ECO:0007669"/>
    <property type="project" value="UniProtKB-SubCell"/>
</dbReference>
<dbReference type="GO" id="GO:0009522">
    <property type="term" value="C:photosystem I"/>
    <property type="evidence" value="ECO:0007669"/>
    <property type="project" value="UniProtKB-KW"/>
</dbReference>
<dbReference type="GO" id="GO:0009523">
    <property type="term" value="C:photosystem II"/>
    <property type="evidence" value="ECO:0007669"/>
    <property type="project" value="UniProtKB-KW"/>
</dbReference>
<dbReference type="GO" id="GO:0016168">
    <property type="term" value="F:chlorophyll binding"/>
    <property type="evidence" value="ECO:0007669"/>
    <property type="project" value="UniProtKB-KW"/>
</dbReference>
<dbReference type="GO" id="GO:0046872">
    <property type="term" value="F:metal ion binding"/>
    <property type="evidence" value="ECO:0007669"/>
    <property type="project" value="UniProtKB-KW"/>
</dbReference>
<dbReference type="GO" id="GO:0009765">
    <property type="term" value="P:photosynthesis, light harvesting"/>
    <property type="evidence" value="ECO:0007669"/>
    <property type="project" value="InterPro"/>
</dbReference>
<dbReference type="FunFam" id="1.10.3460.10:FF:000001">
    <property type="entry name" value="Chlorophyll a-b binding protein, chloroplastic"/>
    <property type="match status" value="1"/>
</dbReference>
<dbReference type="Gene3D" id="1.10.3460.10">
    <property type="entry name" value="Chlorophyll a/b binding protein domain"/>
    <property type="match status" value="1"/>
</dbReference>
<dbReference type="InterPro" id="IPR001344">
    <property type="entry name" value="Chloro_AB-bd_pln"/>
</dbReference>
<dbReference type="InterPro" id="IPR022796">
    <property type="entry name" value="Chloroa_b-bind"/>
</dbReference>
<dbReference type="PANTHER" id="PTHR21649">
    <property type="entry name" value="CHLOROPHYLL A/B BINDING PROTEIN"/>
    <property type="match status" value="1"/>
</dbReference>
<dbReference type="Pfam" id="PF00504">
    <property type="entry name" value="Chloroa_b-bind"/>
    <property type="match status" value="1"/>
</dbReference>
<dbReference type="SUPFAM" id="SSF103511">
    <property type="entry name" value="Chlorophyll a-b binding protein"/>
    <property type="match status" value="1"/>
</dbReference>
<protein>
    <recommendedName>
        <fullName>Chlorophyll a-b binding protein 215, chloroplastic</fullName>
    </recommendedName>
    <alternativeName>
        <fullName>LHCII type II CAB-215</fullName>
        <shortName>LHCP</shortName>
    </alternativeName>
</protein>
<gene>
    <name type="primary">CAB215</name>
    <name type="synonym">LHCB2</name>
</gene>
<proteinExistence type="evidence at protein level"/>
<feature type="transit peptide" description="Chloroplast" evidence="6">
    <location>
        <begin position="1"/>
        <end position="37"/>
    </location>
</feature>
<feature type="chain" id="PRO_0000003682" description="Chlorophyll a-b binding protein 215, chloroplastic">
    <location>
        <begin position="38"/>
        <end position="265"/>
    </location>
</feature>
<feature type="transmembrane region" description="Helical" evidence="4">
    <location>
        <begin position="151"/>
        <end position="171"/>
    </location>
</feature>
<feature type="transmembrane region" description="Helical" evidence="4">
    <location>
        <begin position="219"/>
        <end position="239"/>
    </location>
</feature>
<feature type="binding site" description="axial binding residue" evidence="3">
    <location>
        <position position="57"/>
    </location>
    <ligand>
        <name>chlorophyll b</name>
        <dbReference type="ChEBI" id="CHEBI:61721"/>
        <label>1</label>
    </ligand>
    <ligandPart>
        <name>Mg</name>
        <dbReference type="ChEBI" id="CHEBI:25107"/>
    </ligandPart>
</feature>
<feature type="binding site" evidence="1">
    <location>
        <position position="79"/>
    </location>
    <ligand>
        <name>chlorophyll a</name>
        <dbReference type="ChEBI" id="CHEBI:58416"/>
        <label>1</label>
    </ligand>
</feature>
<feature type="binding site" evidence="1">
    <location>
        <position position="85"/>
    </location>
    <ligand>
        <name>chlorophyll a</name>
        <dbReference type="ChEBI" id="CHEBI:58416"/>
        <label>1</label>
    </ligand>
</feature>
<feature type="binding site" description="axial binding residue" evidence="3">
    <location>
        <position position="98"/>
    </location>
    <ligand>
        <name>chlorophyll a</name>
        <dbReference type="ChEBI" id="CHEBI:58416"/>
        <label>1</label>
    </ligand>
    <ligandPart>
        <name>Mg</name>
        <dbReference type="ChEBI" id="CHEBI:25107"/>
    </ligandPart>
</feature>
<feature type="binding site" description="axial binding residue" evidence="3">
    <location>
        <position position="101"/>
    </location>
    <ligand>
        <name>chlorophyll a</name>
        <dbReference type="ChEBI" id="CHEBI:58416"/>
        <label>2</label>
    </ligand>
    <ligandPart>
        <name>Mg</name>
        <dbReference type="ChEBI" id="CHEBI:25107"/>
    </ligandPart>
</feature>
<feature type="binding site" evidence="1">
    <location>
        <position position="103"/>
    </location>
    <ligand>
        <name>chlorophyll b</name>
        <dbReference type="ChEBI" id="CHEBI:61721"/>
        <label>2</label>
    </ligand>
</feature>
<feature type="binding site" evidence="1">
    <location>
        <position position="136"/>
    </location>
    <ligand>
        <name>chlorophyll a</name>
        <dbReference type="ChEBI" id="CHEBI:58416"/>
        <label>3</label>
    </ligand>
</feature>
<feature type="binding site" evidence="1">
    <location>
        <position position="146"/>
    </location>
    <ligand>
        <name>chlorophyll a</name>
        <dbReference type="ChEBI" id="CHEBI:58416"/>
        <label>3</label>
    </ligand>
</feature>
<feature type="binding site" description="axial binding residue" evidence="1">
    <location>
        <position position="152"/>
    </location>
    <ligand>
        <name>chlorophyll b</name>
        <dbReference type="ChEBI" id="CHEBI:61721"/>
        <label>2</label>
    </ligand>
    <ligandPart>
        <name>Mg</name>
        <dbReference type="ChEBI" id="CHEBI:25107"/>
    </ligandPart>
</feature>
<feature type="binding site" evidence="1">
    <location>
        <position position="156"/>
    </location>
    <ligand>
        <name>chlorophyll b</name>
        <dbReference type="ChEBI" id="CHEBI:61721"/>
        <label>3</label>
    </ligand>
</feature>
<feature type="binding site" evidence="1">
    <location>
        <position position="164"/>
    </location>
    <ligand>
        <name>chlorophyll b</name>
        <dbReference type="ChEBI" id="CHEBI:61721"/>
        <label>4</label>
    </ligand>
</feature>
<feature type="binding site" evidence="2">
    <location>
        <position position="164"/>
    </location>
    <ligand>
        <name>chlorophyll b</name>
        <dbReference type="ChEBI" id="CHEBI:61721"/>
        <label>5</label>
    </ligand>
</feature>
<feature type="binding site" description="axial binding residue" evidence="3">
    <location>
        <position position="172"/>
    </location>
    <ligand>
        <name>chlorophyll b</name>
        <dbReference type="ChEBI" id="CHEBI:61721"/>
        <label>3</label>
    </ligand>
    <ligandPart>
        <name>Mg</name>
        <dbReference type="ChEBI" id="CHEBI:25107"/>
    </ligandPart>
</feature>
<feature type="binding site" evidence="1">
    <location>
        <position position="175"/>
    </location>
    <ligand>
        <name>chlorophyll b</name>
        <dbReference type="ChEBI" id="CHEBI:61721"/>
        <label>4</label>
    </ligand>
</feature>
<feature type="binding site" evidence="1">
    <location>
        <position position="181"/>
    </location>
    <ligand>
        <name>chlorophyll b</name>
        <dbReference type="ChEBI" id="CHEBI:61721"/>
        <label>2</label>
    </ligand>
</feature>
<feature type="binding site" evidence="1">
    <location>
        <position position="212"/>
    </location>
    <ligand>
        <name>chlorophyll a</name>
        <dbReference type="ChEBI" id="CHEBI:58416"/>
        <label>5</label>
    </ligand>
</feature>
<feature type="binding site" description="axial binding residue" evidence="3">
    <location>
        <position position="213"/>
    </location>
    <ligand>
        <name>chlorophyll a</name>
        <dbReference type="ChEBI" id="CHEBI:58416"/>
        <label>3</label>
    </ligand>
    <ligandPart>
        <name>Mg</name>
        <dbReference type="ChEBI" id="CHEBI:25107"/>
    </ligandPart>
</feature>
<feature type="binding site" description="axial binding residue" evidence="3">
    <location>
        <position position="216"/>
    </location>
    <ligand>
        <name>chlorophyll a</name>
        <dbReference type="ChEBI" id="CHEBI:58416"/>
        <label>4</label>
    </ligand>
    <ligandPart>
        <name>Mg</name>
        <dbReference type="ChEBI" id="CHEBI:25107"/>
    </ligandPart>
</feature>
<feature type="binding site" evidence="1">
    <location>
        <position position="218"/>
    </location>
    <ligand>
        <name>chlorophyll a</name>
        <dbReference type="ChEBI" id="CHEBI:58416"/>
        <label>1</label>
    </ligand>
</feature>
<feature type="binding site" description="axial binding residue" evidence="3">
    <location>
        <position position="230"/>
    </location>
    <ligand>
        <name>chlorophyll a</name>
        <dbReference type="ChEBI" id="CHEBI:58416"/>
        <label>5</label>
    </ligand>
    <ligandPart>
        <name>Mg</name>
        <dbReference type="ChEBI" id="CHEBI:25107"/>
    </ligandPart>
</feature>
<feature type="binding site" description="axial binding residue" evidence="3">
    <location>
        <position position="245"/>
    </location>
    <ligand>
        <name>chlorophyll a</name>
        <dbReference type="ChEBI" id="CHEBI:58416"/>
        <label>6</label>
    </ligand>
    <ligandPart>
        <name>Mg</name>
        <dbReference type="ChEBI" id="CHEBI:25107"/>
    </ligandPart>
</feature>
<feature type="binding site" evidence="1">
    <location>
        <position position="254"/>
    </location>
    <ligand>
        <name>chlorophyll a</name>
        <dbReference type="ChEBI" id="CHEBI:58416"/>
        <label>6</label>
    </ligand>
</feature>
<feature type="binding site" evidence="1">
    <location>
        <position position="261"/>
    </location>
    <ligand>
        <name>chlorophyll b</name>
        <dbReference type="ChEBI" id="CHEBI:61721"/>
        <label>5</label>
    </ligand>
</feature>
<feature type="modified residue" description="N2-acetylarginine" evidence="1">
    <location>
        <position position="38"/>
    </location>
</feature>
<feature type="modified residue" description="Phosphothreonine" evidence="1">
    <location>
        <position position="40"/>
    </location>
</feature>
<feature type="sequence conflict" description="In Ref. 2; AAW31512." evidence="6" ref="2">
    <original>R</original>
    <variation>A</variation>
    <location>
        <position position="27"/>
    </location>
</feature>
<name>CB215_PEA</name>
<sequence length="265" mass="28885">MATSAIQQSAFTGKTGLRQGNEFIRKRGNFGQARFTMRRTVKSAPESIWYGPDRPKYLGPFSEQIPSYLTGEFPGDYGWDTAGLSADPETFARNRELEVIHSRWAMLGALGCTFPELLEKNGVKFGEAVWFKAGSQIFAEGGLDYLGNPNLIHAQSILAIWATQVVLMGFVEGYRVGGGPLGEGLDPLYPGGAFDPLGLADDPDSFAELKVKELKNGRLAMFSMFGFFVQAIVTGKGPIQNLYDHVADPVANNAWAFATNFVPGQ</sequence>
<keyword id="KW-0007">Acetylation</keyword>
<keyword id="KW-0148">Chlorophyll</keyword>
<keyword id="KW-0150">Chloroplast</keyword>
<keyword id="KW-0157">Chromophore</keyword>
<keyword id="KW-0903">Direct protein sequencing</keyword>
<keyword id="KW-0460">Magnesium</keyword>
<keyword id="KW-0472">Membrane</keyword>
<keyword id="KW-0479">Metal-binding</keyword>
<keyword id="KW-0597">Phosphoprotein</keyword>
<keyword id="KW-0602">Photosynthesis</keyword>
<keyword id="KW-0603">Photosystem I</keyword>
<keyword id="KW-0604">Photosystem II</keyword>
<keyword id="KW-0934">Plastid</keyword>
<keyword id="KW-0793">Thylakoid</keyword>
<keyword id="KW-0809">Transit peptide</keyword>
<keyword id="KW-0812">Transmembrane</keyword>
<keyword id="KW-1133">Transmembrane helix</keyword>
<organism>
    <name type="scientific">Pisum sativum</name>
    <name type="common">Garden pea</name>
    <name type="synonym">Lathyrus oleraceus</name>
    <dbReference type="NCBI Taxonomy" id="3888"/>
    <lineage>
        <taxon>Eukaryota</taxon>
        <taxon>Viridiplantae</taxon>
        <taxon>Streptophyta</taxon>
        <taxon>Embryophyta</taxon>
        <taxon>Tracheophyta</taxon>
        <taxon>Spermatophyta</taxon>
        <taxon>Magnoliopsida</taxon>
        <taxon>eudicotyledons</taxon>
        <taxon>Gunneridae</taxon>
        <taxon>Pentapetalae</taxon>
        <taxon>rosids</taxon>
        <taxon>fabids</taxon>
        <taxon>Fabales</taxon>
        <taxon>Fabaceae</taxon>
        <taxon>Papilionoideae</taxon>
        <taxon>50 kb inversion clade</taxon>
        <taxon>NPAAA clade</taxon>
        <taxon>Hologalegina</taxon>
        <taxon>IRL clade</taxon>
        <taxon>Fabeae</taxon>
        <taxon>Pisum</taxon>
    </lineage>
</organism>
<accession>P27520</accession>
<accession>P35389</accession>
<accession>Q5I8X2</accession>
<evidence type="ECO:0000250" key="1"/>
<evidence type="ECO:0000250" key="2">
    <source>
        <dbReference type="UniProtKB" id="P07371"/>
    </source>
</evidence>
<evidence type="ECO:0000250" key="3">
    <source>
        <dbReference type="UniProtKB" id="P12333"/>
    </source>
</evidence>
<evidence type="ECO:0000255" key="4"/>
<evidence type="ECO:0000269" key="5">
    <source>
    </source>
</evidence>
<evidence type="ECO:0000305" key="6"/>